<gene>
    <name type="primary">rps4</name>
</gene>
<proteinExistence type="inferred from homology"/>
<keyword id="KW-0150">Chloroplast</keyword>
<keyword id="KW-0934">Plastid</keyword>
<keyword id="KW-0687">Ribonucleoprotein</keyword>
<keyword id="KW-0689">Ribosomal protein</keyword>
<keyword id="KW-0694">RNA-binding</keyword>
<keyword id="KW-0699">rRNA-binding</keyword>
<reference key="1">
    <citation type="journal article" date="2006" name="Mol. Biol. Evol.">
        <title>The chloroplast genome sequence of Chara vulgaris sheds new light into the closest green algal relatives of land plants.</title>
        <authorList>
            <person name="Turmel M."/>
            <person name="Otis C."/>
            <person name="Lemieux C."/>
        </authorList>
    </citation>
    <scope>NUCLEOTIDE SEQUENCE [LARGE SCALE GENOMIC DNA]</scope>
</reference>
<protein>
    <recommendedName>
        <fullName evidence="2">Small ribosomal subunit protein uS4c</fullName>
    </recommendedName>
    <alternativeName>
        <fullName>30S ribosomal protein S4, chloroplastic</fullName>
    </alternativeName>
</protein>
<organism>
    <name type="scientific">Chara vulgaris</name>
    <name type="common">Common stonewort</name>
    <dbReference type="NCBI Taxonomy" id="55564"/>
    <lineage>
        <taxon>Eukaryota</taxon>
        <taxon>Viridiplantae</taxon>
        <taxon>Streptophyta</taxon>
        <taxon>Charophyceae</taxon>
        <taxon>Charales</taxon>
        <taxon>Characeae</taxon>
        <taxon>Chara</taxon>
    </lineage>
</organism>
<sequence>MSRYRGPRLKIVRRLGPLPGFTQKLYKSKSQYLGSSTTSSSSNKKISQYNIRLLEKQKLRFYYGLTERQLLKYVTIARNAKGPTGQVLLQLLEMRLDNIVFRLGMAPTIPAARQLVNHRHILVNDFTVNIPSYSCKLGDKISVQKRFESKTNIFANSTQSASLKVPSHLTLNPAKNEGLVHQIVDREFIGAKINELLVVEYYSRQV</sequence>
<geneLocation type="chloroplast"/>
<accession>Q1ACM7</accession>
<name>RR4_CHAVU</name>
<comment type="function">
    <text evidence="1">One of the primary rRNA binding proteins, it binds directly to 16S rRNA where it nucleates assembly of the body of the 30S subunit.</text>
</comment>
<comment type="function">
    <text evidence="1">With S5 and S12 plays an important role in translational accuracy.</text>
</comment>
<comment type="subunit">
    <text evidence="1">Part of the 30S ribosomal subunit. Contacts protein S5. The interaction surface between S4 and S5 is involved in control of translational fidelity (By similarity).</text>
</comment>
<comment type="subcellular location">
    <subcellularLocation>
        <location>Plastid</location>
        <location>Chloroplast</location>
    </subcellularLocation>
</comment>
<comment type="similarity">
    <text evidence="2">Belongs to the universal ribosomal protein uS4 family.</text>
</comment>
<dbReference type="EMBL" id="DQ229107">
    <property type="protein sequence ID" value="ABA61969.1"/>
    <property type="molecule type" value="Genomic_DNA"/>
</dbReference>
<dbReference type="RefSeq" id="YP_635720.1">
    <property type="nucleotide sequence ID" value="NC_008097.1"/>
</dbReference>
<dbReference type="SMR" id="Q1ACM7"/>
<dbReference type="GeneID" id="4100340"/>
<dbReference type="GO" id="GO:0009507">
    <property type="term" value="C:chloroplast"/>
    <property type="evidence" value="ECO:0007669"/>
    <property type="project" value="UniProtKB-SubCell"/>
</dbReference>
<dbReference type="GO" id="GO:0015935">
    <property type="term" value="C:small ribosomal subunit"/>
    <property type="evidence" value="ECO:0007669"/>
    <property type="project" value="InterPro"/>
</dbReference>
<dbReference type="GO" id="GO:0019843">
    <property type="term" value="F:rRNA binding"/>
    <property type="evidence" value="ECO:0007669"/>
    <property type="project" value="UniProtKB-UniRule"/>
</dbReference>
<dbReference type="GO" id="GO:0003735">
    <property type="term" value="F:structural constituent of ribosome"/>
    <property type="evidence" value="ECO:0007669"/>
    <property type="project" value="InterPro"/>
</dbReference>
<dbReference type="GO" id="GO:0042274">
    <property type="term" value="P:ribosomal small subunit biogenesis"/>
    <property type="evidence" value="ECO:0007669"/>
    <property type="project" value="TreeGrafter"/>
</dbReference>
<dbReference type="GO" id="GO:0006412">
    <property type="term" value="P:translation"/>
    <property type="evidence" value="ECO:0007669"/>
    <property type="project" value="UniProtKB-UniRule"/>
</dbReference>
<dbReference type="CDD" id="cd00165">
    <property type="entry name" value="S4"/>
    <property type="match status" value="1"/>
</dbReference>
<dbReference type="FunFam" id="3.10.290.10:FF:000001">
    <property type="entry name" value="30S ribosomal protein S4"/>
    <property type="match status" value="1"/>
</dbReference>
<dbReference type="FunFam" id="1.10.1050.10:FF:000002">
    <property type="entry name" value="30S ribosomal protein S4, chloroplastic"/>
    <property type="match status" value="1"/>
</dbReference>
<dbReference type="Gene3D" id="1.10.1050.10">
    <property type="entry name" value="Ribosomal Protein S4 Delta 41, Chain A, domain 1"/>
    <property type="match status" value="1"/>
</dbReference>
<dbReference type="Gene3D" id="3.10.290.10">
    <property type="entry name" value="RNA-binding S4 domain"/>
    <property type="match status" value="1"/>
</dbReference>
<dbReference type="HAMAP" id="MF_01306_B">
    <property type="entry name" value="Ribosomal_uS4_B"/>
    <property type="match status" value="1"/>
</dbReference>
<dbReference type="InterPro" id="IPR022801">
    <property type="entry name" value="Ribosomal_uS4"/>
</dbReference>
<dbReference type="InterPro" id="IPR005709">
    <property type="entry name" value="Ribosomal_uS4_bac-type"/>
</dbReference>
<dbReference type="InterPro" id="IPR018079">
    <property type="entry name" value="Ribosomal_uS4_CS"/>
</dbReference>
<dbReference type="InterPro" id="IPR001912">
    <property type="entry name" value="Ribosomal_uS4_N"/>
</dbReference>
<dbReference type="InterPro" id="IPR002942">
    <property type="entry name" value="S4_RNA-bd"/>
</dbReference>
<dbReference type="InterPro" id="IPR036986">
    <property type="entry name" value="S4_RNA-bd_sf"/>
</dbReference>
<dbReference type="NCBIfam" id="NF003717">
    <property type="entry name" value="PRK05327.1"/>
    <property type="match status" value="1"/>
</dbReference>
<dbReference type="NCBIfam" id="TIGR01017">
    <property type="entry name" value="rpsD_bact"/>
    <property type="match status" value="1"/>
</dbReference>
<dbReference type="PANTHER" id="PTHR11831">
    <property type="entry name" value="30S 40S RIBOSOMAL PROTEIN"/>
    <property type="match status" value="1"/>
</dbReference>
<dbReference type="PANTHER" id="PTHR11831:SF4">
    <property type="entry name" value="SMALL RIBOSOMAL SUBUNIT PROTEIN US4M"/>
    <property type="match status" value="1"/>
</dbReference>
<dbReference type="Pfam" id="PF00163">
    <property type="entry name" value="Ribosomal_S4"/>
    <property type="match status" value="1"/>
</dbReference>
<dbReference type="Pfam" id="PF01479">
    <property type="entry name" value="S4"/>
    <property type="match status" value="1"/>
</dbReference>
<dbReference type="SMART" id="SM01390">
    <property type="entry name" value="Ribosomal_S4"/>
    <property type="match status" value="1"/>
</dbReference>
<dbReference type="SMART" id="SM00363">
    <property type="entry name" value="S4"/>
    <property type="match status" value="1"/>
</dbReference>
<dbReference type="SUPFAM" id="SSF55174">
    <property type="entry name" value="Alpha-L RNA-binding motif"/>
    <property type="match status" value="1"/>
</dbReference>
<dbReference type="PROSITE" id="PS00632">
    <property type="entry name" value="RIBOSOMAL_S4"/>
    <property type="match status" value="1"/>
</dbReference>
<dbReference type="PROSITE" id="PS50889">
    <property type="entry name" value="S4"/>
    <property type="match status" value="1"/>
</dbReference>
<evidence type="ECO:0000250" key="1"/>
<evidence type="ECO:0000305" key="2"/>
<feature type="chain" id="PRO_0000277006" description="Small ribosomal subunit protein uS4c">
    <location>
        <begin position="1"/>
        <end position="206"/>
    </location>
</feature>
<feature type="domain" description="S4 RNA-binding">
    <location>
        <begin position="94"/>
        <end position="152"/>
    </location>
</feature>